<organism>
    <name type="scientific">Pasteurella multocida (strain Pm70)</name>
    <dbReference type="NCBI Taxonomy" id="272843"/>
    <lineage>
        <taxon>Bacteria</taxon>
        <taxon>Pseudomonadati</taxon>
        <taxon>Pseudomonadota</taxon>
        <taxon>Gammaproteobacteria</taxon>
        <taxon>Pasteurellales</taxon>
        <taxon>Pasteurellaceae</taxon>
        <taxon>Pasteurella</taxon>
    </lineage>
</organism>
<name>Y647_PASMU</name>
<protein>
    <recommendedName>
        <fullName>UPF0102 protein PM0647</fullName>
    </recommendedName>
</protein>
<keyword id="KW-1185">Reference proteome</keyword>
<dbReference type="EMBL" id="AE004439">
    <property type="protein sequence ID" value="AAK02731.1"/>
    <property type="molecule type" value="Genomic_DNA"/>
</dbReference>
<dbReference type="RefSeq" id="WP_005716025.1">
    <property type="nucleotide sequence ID" value="NC_002663.1"/>
</dbReference>
<dbReference type="SMR" id="P57862"/>
<dbReference type="STRING" id="272843.PM0647"/>
<dbReference type="EnsemblBacteria" id="AAK02731">
    <property type="protein sequence ID" value="AAK02731"/>
    <property type="gene ID" value="PM0647"/>
</dbReference>
<dbReference type="KEGG" id="pmu:PM0647"/>
<dbReference type="PATRIC" id="fig|272843.6.peg.655"/>
<dbReference type="HOGENOM" id="CLU_115353_1_0_6"/>
<dbReference type="OrthoDB" id="9794876at2"/>
<dbReference type="Proteomes" id="UP000000809">
    <property type="component" value="Chromosome"/>
</dbReference>
<dbReference type="GO" id="GO:0003676">
    <property type="term" value="F:nucleic acid binding"/>
    <property type="evidence" value="ECO:0007669"/>
    <property type="project" value="InterPro"/>
</dbReference>
<dbReference type="Gene3D" id="3.40.1350.10">
    <property type="match status" value="1"/>
</dbReference>
<dbReference type="HAMAP" id="MF_00048">
    <property type="entry name" value="UPF0102"/>
    <property type="match status" value="1"/>
</dbReference>
<dbReference type="InterPro" id="IPR011335">
    <property type="entry name" value="Restrct_endonuc-II-like"/>
</dbReference>
<dbReference type="InterPro" id="IPR011856">
    <property type="entry name" value="tRNA_endonuc-like_dom_sf"/>
</dbReference>
<dbReference type="InterPro" id="IPR003509">
    <property type="entry name" value="UPF0102_YraN-like"/>
</dbReference>
<dbReference type="NCBIfam" id="NF009150">
    <property type="entry name" value="PRK12497.1-3"/>
    <property type="match status" value="1"/>
</dbReference>
<dbReference type="NCBIfam" id="TIGR00252">
    <property type="entry name" value="YraN family protein"/>
    <property type="match status" value="1"/>
</dbReference>
<dbReference type="PANTHER" id="PTHR34039">
    <property type="entry name" value="UPF0102 PROTEIN YRAN"/>
    <property type="match status" value="1"/>
</dbReference>
<dbReference type="PANTHER" id="PTHR34039:SF1">
    <property type="entry name" value="UPF0102 PROTEIN YRAN"/>
    <property type="match status" value="1"/>
</dbReference>
<dbReference type="Pfam" id="PF02021">
    <property type="entry name" value="UPF0102"/>
    <property type="match status" value="1"/>
</dbReference>
<dbReference type="SUPFAM" id="SSF52980">
    <property type="entry name" value="Restriction endonuclease-like"/>
    <property type="match status" value="1"/>
</dbReference>
<comment type="similarity">
    <text evidence="1">Belongs to the UPF0102 family.</text>
</comment>
<accession>P57862</accession>
<proteinExistence type="inferred from homology"/>
<gene>
    <name type="ordered locus">PM0647</name>
</gene>
<feature type="chain" id="PRO_0000167369" description="UPF0102 protein PM0647">
    <location>
        <begin position="1"/>
        <end position="119"/>
    </location>
</feature>
<reference key="1">
    <citation type="journal article" date="2001" name="Proc. Natl. Acad. Sci. U.S.A.">
        <title>Complete genomic sequence of Pasteurella multocida Pm70.</title>
        <authorList>
            <person name="May B.J."/>
            <person name="Zhang Q."/>
            <person name="Li L.L."/>
            <person name="Paustian M.L."/>
            <person name="Whittam T.S."/>
            <person name="Kapur V."/>
        </authorList>
    </citation>
    <scope>NUCLEOTIDE SEQUENCE [LARGE SCALE GENOMIC DNA]</scope>
    <source>
        <strain>Pm70</strain>
    </source>
</reference>
<evidence type="ECO:0000305" key="1"/>
<sequence>MFSLKRQQGARFEYQARLFLESKGLQFVAANQSFSCGELDLIMRDQDTLVFVEVRQRKNAVFGSAVESVDWKKQKKWLNAASLWLAQQNRSLEDTDCRFDLIAFGKTTQDLEWIINFLD</sequence>